<keyword id="KW-0002">3D-structure</keyword>
<keyword id="KW-0131">Cell cycle</keyword>
<keyword id="KW-0132">Cell division</keyword>
<keyword id="KW-0966">Cell projection</keyword>
<keyword id="KW-0175">Coiled coil</keyword>
<keyword id="KW-0963">Cytoplasm</keyword>
<keyword id="KW-0968">Cytoplasmic vesicle</keyword>
<keyword id="KW-0206">Cytoskeleton</keyword>
<keyword id="KW-0342">GTP-binding</keyword>
<keyword id="KW-0547">Nucleotide-binding</keyword>
<keyword id="KW-1267">Proteomics identification</keyword>
<keyword id="KW-1185">Reference proteome</keyword>
<gene>
    <name evidence="10" type="primary">SEPTIN14</name>
    <name evidence="10" type="synonym">SEPT14</name>
</gene>
<evidence type="ECO:0000250" key="1"/>
<evidence type="ECO:0000250" key="2">
    <source>
        <dbReference type="UniProtKB" id="Q9DA97"/>
    </source>
</evidence>
<evidence type="ECO:0000255" key="3"/>
<evidence type="ECO:0000255" key="4">
    <source>
        <dbReference type="PROSITE-ProRule" id="PRU01056"/>
    </source>
</evidence>
<evidence type="ECO:0000269" key="5">
    <source>
    </source>
</evidence>
<evidence type="ECO:0000269" key="6">
    <source>
    </source>
</evidence>
<evidence type="ECO:0000269" key="7">
    <source>
    </source>
</evidence>
<evidence type="ECO:0000269" key="8">
    <source>
    </source>
</evidence>
<evidence type="ECO:0000305" key="9"/>
<evidence type="ECO:0000312" key="10">
    <source>
        <dbReference type="HGNC" id="HGNC:33280"/>
    </source>
</evidence>
<evidence type="ECO:0007829" key="11">
    <source>
        <dbReference type="PDB" id="8SJJ"/>
    </source>
</evidence>
<comment type="function">
    <text evidence="2 8 9">Filament-forming cytoskeletal GTPase (Probable). Involved in the migration of cortical neurons and the formation of neuron leading processes during embryonic development (By similarity). Plays a role in sperm head formation during spermiogenesis, potentially via facilitating localization of ACTN4 to cell filaments (PubMed:33228246).</text>
</comment>
<comment type="subunit">
    <text evidence="1 2 5 8">Septins polymerize into heterooligomeric protein complexes that form filaments, and can associate with cellular membranes, actin filaments and microtubules. GTPase activity is required for filament formation. Interacts with ACTN4 (PubMed:33228246). Interacts with SEPTIN9 (PubMed:17922164). Interacts (via C-terminus) with SEPTIN4 (By similarity).</text>
</comment>
<comment type="interaction">
    <interactant intactId="EBI-2009297">
        <id>Q6ZU15</id>
    </interactant>
    <interactant intactId="EBI-742909">
        <id>Q9H6L4</id>
        <label>ARMC7</label>
    </interactant>
    <organismsDiffer>false</organismsDiffer>
    <experiments>3</experiments>
</comment>
<comment type="interaction">
    <interactant intactId="EBI-2009297">
        <id>Q6ZU15</id>
    </interactant>
    <interactant intactId="EBI-11986315">
        <id>Q9H5Z6-2</id>
        <label>FAM124B</label>
    </interactant>
    <organismsDiffer>false</organismsDiffer>
    <experiments>3</experiments>
</comment>
<comment type="interaction">
    <interactant intactId="EBI-2009297">
        <id>Q6ZU15</id>
    </interactant>
    <interactant intactId="EBI-739467">
        <id>Q9H8Y8</id>
        <label>GORASP2</label>
    </interactant>
    <organismsDiffer>false</organismsDiffer>
    <experiments>3</experiments>
</comment>
<comment type="interaction">
    <interactant intactId="EBI-2009297">
        <id>Q6ZU15</id>
    </interactant>
    <interactant intactId="EBI-741158">
        <id>Q96HA8</id>
        <label>NTAQ1</label>
    </interactant>
    <organismsDiffer>false</organismsDiffer>
    <experiments>3</experiments>
</comment>
<comment type="interaction">
    <interactant intactId="EBI-2009297">
        <id>Q6ZU15</id>
    </interactant>
    <interactant intactId="EBI-851558">
        <id>Q9UHD8-1</id>
        <label>SEPTIN9</label>
    </interactant>
    <organismsDiffer>false</organismsDiffer>
    <experiments>3</experiments>
</comment>
<comment type="interaction">
    <interactant intactId="EBI-2009297">
        <id>Q6ZU15</id>
    </interactant>
    <interactant intactId="EBI-851569">
        <id>Q9UHD8-3</id>
        <label>SEPTIN9</label>
    </interactant>
    <organismsDiffer>false</organismsDiffer>
    <experiments>3</experiments>
</comment>
<comment type="interaction">
    <interactant intactId="EBI-2009297">
        <id>Q6ZU15</id>
    </interactant>
    <interactant intactId="EBI-741945">
        <id>Q9BRG1</id>
        <label>VPS25</label>
    </interactant>
    <organismsDiffer>false</organismsDiffer>
    <experiments>3</experiments>
</comment>
<comment type="subcellular location">
    <subcellularLocation>
        <location evidence="5">Cytoplasm</location>
    </subcellularLocation>
    <subcellularLocation>
        <location evidence="5 6">Cytoplasm</location>
        <location evidence="5 6">Cytoskeleton</location>
    </subcellularLocation>
    <subcellularLocation>
        <location evidence="2">Cell projection</location>
        <location evidence="2">Axon</location>
    </subcellularLocation>
    <subcellularLocation>
        <location evidence="2">Cell projection</location>
        <location evidence="2">Dendrite</location>
    </subcellularLocation>
    <subcellularLocation>
        <location evidence="2">Perikaryon</location>
    </subcellularLocation>
    <subcellularLocation>
        <location evidence="2">Cytoplasm</location>
        <location evidence="2">Perinuclear region</location>
    </subcellularLocation>
    <subcellularLocation>
        <location evidence="7">Cytoplasmic vesicle</location>
        <location evidence="7">Secretory vesicle</location>
        <location evidence="7">Acrosome</location>
    </subcellularLocation>
    <text evidence="2 5">Colocalizes with actin stress fibers (PubMed:17922164). Expressed in the perinuclear rim and manchette structure in early elongating spermatids during spermiogenesis (By similarity).</text>
</comment>
<comment type="tissue specificity">
    <text evidence="5 7">Testis-specific (at protein level).</text>
</comment>
<comment type="developmental stage">
    <text evidence="7">Expressed in all cell stages of spermatogenesis.</text>
</comment>
<comment type="similarity">
    <text evidence="4">Belongs to the TRAFAC class TrmE-Era-EngA-EngB-Septin-like GTPase superfamily. Septin GTPase family.</text>
</comment>
<comment type="sequence caution" evidence="9">
    <conflict type="erroneous initiation">
        <sequence resource="EMBL-CDS" id="BAC86412"/>
    </conflict>
</comment>
<reference key="1">
    <citation type="journal article" date="2004" name="Nat. Genet.">
        <title>Complete sequencing and characterization of 21,243 full-length human cDNAs.</title>
        <authorList>
            <person name="Ota T."/>
            <person name="Suzuki Y."/>
            <person name="Nishikawa T."/>
            <person name="Otsuki T."/>
            <person name="Sugiyama T."/>
            <person name="Irie R."/>
            <person name="Wakamatsu A."/>
            <person name="Hayashi K."/>
            <person name="Sato H."/>
            <person name="Nagai K."/>
            <person name="Kimura K."/>
            <person name="Makita H."/>
            <person name="Sekine M."/>
            <person name="Obayashi M."/>
            <person name="Nishi T."/>
            <person name="Shibahara T."/>
            <person name="Tanaka T."/>
            <person name="Ishii S."/>
            <person name="Yamamoto J."/>
            <person name="Saito K."/>
            <person name="Kawai Y."/>
            <person name="Isono Y."/>
            <person name="Nakamura Y."/>
            <person name="Nagahari K."/>
            <person name="Murakami K."/>
            <person name="Yasuda T."/>
            <person name="Iwayanagi T."/>
            <person name="Wagatsuma M."/>
            <person name="Shiratori A."/>
            <person name="Sudo H."/>
            <person name="Hosoiri T."/>
            <person name="Kaku Y."/>
            <person name="Kodaira H."/>
            <person name="Kondo H."/>
            <person name="Sugawara M."/>
            <person name="Takahashi M."/>
            <person name="Kanda K."/>
            <person name="Yokoi T."/>
            <person name="Furuya T."/>
            <person name="Kikkawa E."/>
            <person name="Omura Y."/>
            <person name="Abe K."/>
            <person name="Kamihara K."/>
            <person name="Katsuta N."/>
            <person name="Sato K."/>
            <person name="Tanikawa M."/>
            <person name="Yamazaki M."/>
            <person name="Ninomiya K."/>
            <person name="Ishibashi T."/>
            <person name="Yamashita H."/>
            <person name="Murakawa K."/>
            <person name="Fujimori K."/>
            <person name="Tanai H."/>
            <person name="Kimata M."/>
            <person name="Watanabe M."/>
            <person name="Hiraoka S."/>
            <person name="Chiba Y."/>
            <person name="Ishida S."/>
            <person name="Ono Y."/>
            <person name="Takiguchi S."/>
            <person name="Watanabe S."/>
            <person name="Yosida M."/>
            <person name="Hotuta T."/>
            <person name="Kusano J."/>
            <person name="Kanehori K."/>
            <person name="Takahashi-Fujii A."/>
            <person name="Hara H."/>
            <person name="Tanase T.-O."/>
            <person name="Nomura Y."/>
            <person name="Togiya S."/>
            <person name="Komai F."/>
            <person name="Hara R."/>
            <person name="Takeuchi K."/>
            <person name="Arita M."/>
            <person name="Imose N."/>
            <person name="Musashino K."/>
            <person name="Yuuki H."/>
            <person name="Oshima A."/>
            <person name="Sasaki N."/>
            <person name="Aotsuka S."/>
            <person name="Yoshikawa Y."/>
            <person name="Matsunawa H."/>
            <person name="Ichihara T."/>
            <person name="Shiohata N."/>
            <person name="Sano S."/>
            <person name="Moriya S."/>
            <person name="Momiyama H."/>
            <person name="Satoh N."/>
            <person name="Takami S."/>
            <person name="Terashima Y."/>
            <person name="Suzuki O."/>
            <person name="Nakagawa S."/>
            <person name="Senoh A."/>
            <person name="Mizoguchi H."/>
            <person name="Goto Y."/>
            <person name="Shimizu F."/>
            <person name="Wakebe H."/>
            <person name="Hishigaki H."/>
            <person name="Watanabe T."/>
            <person name="Sugiyama A."/>
            <person name="Takemoto M."/>
            <person name="Kawakami B."/>
            <person name="Yamazaki M."/>
            <person name="Watanabe K."/>
            <person name="Kumagai A."/>
            <person name="Itakura S."/>
            <person name="Fukuzumi Y."/>
            <person name="Fujimori Y."/>
            <person name="Komiyama M."/>
            <person name="Tashiro H."/>
            <person name="Tanigami A."/>
            <person name="Fujiwara T."/>
            <person name="Ono T."/>
            <person name="Yamada K."/>
            <person name="Fujii Y."/>
            <person name="Ozaki K."/>
            <person name="Hirao M."/>
            <person name="Ohmori Y."/>
            <person name="Kawabata A."/>
            <person name="Hikiji T."/>
            <person name="Kobatake N."/>
            <person name="Inagaki H."/>
            <person name="Ikema Y."/>
            <person name="Okamoto S."/>
            <person name="Okitani R."/>
            <person name="Kawakami T."/>
            <person name="Noguchi S."/>
            <person name="Itoh T."/>
            <person name="Shigeta K."/>
            <person name="Senba T."/>
            <person name="Matsumura K."/>
            <person name="Nakajima Y."/>
            <person name="Mizuno T."/>
            <person name="Morinaga M."/>
            <person name="Sasaki M."/>
            <person name="Togashi T."/>
            <person name="Oyama M."/>
            <person name="Hata H."/>
            <person name="Watanabe M."/>
            <person name="Komatsu T."/>
            <person name="Mizushima-Sugano J."/>
            <person name="Satoh T."/>
            <person name="Shirai Y."/>
            <person name="Takahashi Y."/>
            <person name="Nakagawa K."/>
            <person name="Okumura K."/>
            <person name="Nagase T."/>
            <person name="Nomura N."/>
            <person name="Kikuchi H."/>
            <person name="Masuho Y."/>
            <person name="Yamashita R."/>
            <person name="Nakai K."/>
            <person name="Yada T."/>
            <person name="Nakamura Y."/>
            <person name="Ohara O."/>
            <person name="Isogai T."/>
            <person name="Sugano S."/>
        </authorList>
    </citation>
    <scope>NUCLEOTIDE SEQUENCE [LARGE SCALE MRNA]</scope>
    <source>
        <tissue>Testis</tissue>
    </source>
</reference>
<reference key="2">
    <citation type="journal article" date="2003" name="Nature">
        <title>The DNA sequence of human chromosome 7.</title>
        <authorList>
            <person name="Hillier L.W."/>
            <person name="Fulton R.S."/>
            <person name="Fulton L.A."/>
            <person name="Graves T.A."/>
            <person name="Pepin K.H."/>
            <person name="Wagner-McPherson C."/>
            <person name="Layman D."/>
            <person name="Maas J."/>
            <person name="Jaeger S."/>
            <person name="Walker R."/>
            <person name="Wylie K."/>
            <person name="Sekhon M."/>
            <person name="Becker M.C."/>
            <person name="O'Laughlin M.D."/>
            <person name="Schaller M.E."/>
            <person name="Fewell G.A."/>
            <person name="Delehaunty K.D."/>
            <person name="Miner T.L."/>
            <person name="Nash W.E."/>
            <person name="Cordes M."/>
            <person name="Du H."/>
            <person name="Sun H."/>
            <person name="Edwards J."/>
            <person name="Bradshaw-Cordum H."/>
            <person name="Ali J."/>
            <person name="Andrews S."/>
            <person name="Isak A."/>
            <person name="Vanbrunt A."/>
            <person name="Nguyen C."/>
            <person name="Du F."/>
            <person name="Lamar B."/>
            <person name="Courtney L."/>
            <person name="Kalicki J."/>
            <person name="Ozersky P."/>
            <person name="Bielicki L."/>
            <person name="Scott K."/>
            <person name="Holmes A."/>
            <person name="Harkins R."/>
            <person name="Harris A."/>
            <person name="Strong C.M."/>
            <person name="Hou S."/>
            <person name="Tomlinson C."/>
            <person name="Dauphin-Kohlberg S."/>
            <person name="Kozlowicz-Reilly A."/>
            <person name="Leonard S."/>
            <person name="Rohlfing T."/>
            <person name="Rock S.M."/>
            <person name="Tin-Wollam A.-M."/>
            <person name="Abbott A."/>
            <person name="Minx P."/>
            <person name="Maupin R."/>
            <person name="Strowmatt C."/>
            <person name="Latreille P."/>
            <person name="Miller N."/>
            <person name="Johnson D."/>
            <person name="Murray J."/>
            <person name="Woessner J.P."/>
            <person name="Wendl M.C."/>
            <person name="Yang S.-P."/>
            <person name="Schultz B.R."/>
            <person name="Wallis J.W."/>
            <person name="Spieth J."/>
            <person name="Bieri T.A."/>
            <person name="Nelson J.O."/>
            <person name="Berkowicz N."/>
            <person name="Wohldmann P.E."/>
            <person name="Cook L.L."/>
            <person name="Hickenbotham M.T."/>
            <person name="Eldred J."/>
            <person name="Williams D."/>
            <person name="Bedell J.A."/>
            <person name="Mardis E.R."/>
            <person name="Clifton S.W."/>
            <person name="Chissoe S.L."/>
            <person name="Marra M.A."/>
            <person name="Raymond C."/>
            <person name="Haugen E."/>
            <person name="Gillett W."/>
            <person name="Zhou Y."/>
            <person name="James R."/>
            <person name="Phelps K."/>
            <person name="Iadanoto S."/>
            <person name="Bubb K."/>
            <person name="Simms E."/>
            <person name="Levy R."/>
            <person name="Clendenning J."/>
            <person name="Kaul R."/>
            <person name="Kent W.J."/>
            <person name="Furey T.S."/>
            <person name="Baertsch R.A."/>
            <person name="Brent M.R."/>
            <person name="Keibler E."/>
            <person name="Flicek P."/>
            <person name="Bork P."/>
            <person name="Suyama M."/>
            <person name="Bailey J.A."/>
            <person name="Portnoy M.E."/>
            <person name="Torrents D."/>
            <person name="Chinwalla A.T."/>
            <person name="Gish W.R."/>
            <person name="Eddy S.R."/>
            <person name="McPherson J.D."/>
            <person name="Olson M.V."/>
            <person name="Eichler E.E."/>
            <person name="Green E.D."/>
            <person name="Waterston R.H."/>
            <person name="Wilson R.K."/>
        </authorList>
    </citation>
    <scope>NUCLEOTIDE SEQUENCE [LARGE SCALE GENOMIC DNA]</scope>
</reference>
<reference key="3">
    <citation type="journal article" date="2007" name="Mamm. Genome">
        <title>Characterization of a SEPT9 interacting protein, SEPT14, a novel testis-specific septin.</title>
        <authorList>
            <person name="Peterson E.A."/>
            <person name="Kalikin L.M."/>
            <person name="Steels J.D."/>
            <person name="Estey M.P."/>
            <person name="Trimble W.S."/>
            <person name="Petty E.M."/>
        </authorList>
    </citation>
    <scope>INTERACTION WITH SEPTIN9</scope>
    <scope>SUBCELLULAR LOCATION</scope>
    <scope>TISSUE SPECIFICITY</scope>
</reference>
<reference key="4">
    <citation type="journal article" date="2020" name="Reprod. Biol.">
        <title>Expression and localization of Septin 14 gene and protein in infertile men testis.</title>
        <authorList>
            <person name="Vahabi Barzi N."/>
            <person name="Kakavand K."/>
            <person name="Sodeifi N."/>
            <person name="Ghezelayagh Z."/>
            <person name="Sabbaghian M."/>
        </authorList>
    </citation>
    <scope>SUBCELLULAR LOCATION</scope>
    <scope>DEVELOPMENTAL STAGE</scope>
    <scope>TISSUE SPECIFICITY</scope>
</reference>
<reference key="5">
    <citation type="journal article" date="2019" name="J. Clin. Med.">
        <title>SEPT14 Mutations and Teratozoospermia: Genetic Effects on Sperm Head Morphology and DNA Integrity.</title>
        <authorList>
            <person name="Wang Y.Y."/>
            <person name="Lai T.H."/>
            <person name="Chen M.F."/>
            <person name="Lee H.L."/>
            <person name="Kuo P.L."/>
            <person name="Lin Y.H."/>
        </authorList>
    </citation>
    <scope>VARIANTS THR-123 AND THR-333</scope>
    <scope>CHARACTERIZATION OF VARIANTS THR-123 AND THR-333</scope>
    <scope>SUBCELLULAR LOCATION</scope>
</reference>
<reference key="6">
    <citation type="journal article" date="2020" name="Biomedicines">
        <title>ACTN4 Mediates SEPT14 Mutation-Induced Sperm Head Defects.</title>
        <authorList>
            <person name="Lin Y.H."/>
            <person name="Huang C.Y."/>
            <person name="Ke C.C."/>
            <person name="Wang Y.Y."/>
            <person name="Lai T.H."/>
            <person name="Liu H.C."/>
            <person name="Ku W.C."/>
            <person name="Chan C.C."/>
            <person name="Lin Y.H."/>
        </authorList>
    </citation>
    <scope>CHARACTERIZATION OF VARIANTS THR-123 AND THR-333</scope>
    <scope>FUNCTION</scope>
    <scope>INTERACTION WITH ACTN4</scope>
</reference>
<name>SEP14_HUMAN</name>
<organism>
    <name type="scientific">Homo sapiens</name>
    <name type="common">Human</name>
    <dbReference type="NCBI Taxonomy" id="9606"/>
    <lineage>
        <taxon>Eukaryota</taxon>
        <taxon>Metazoa</taxon>
        <taxon>Chordata</taxon>
        <taxon>Craniata</taxon>
        <taxon>Vertebrata</taxon>
        <taxon>Euteleostomi</taxon>
        <taxon>Mammalia</taxon>
        <taxon>Eutheria</taxon>
        <taxon>Euarchontoglires</taxon>
        <taxon>Primates</taxon>
        <taxon>Haplorrhini</taxon>
        <taxon>Catarrhini</taxon>
        <taxon>Hominidae</taxon>
        <taxon>Homo</taxon>
    </lineage>
</organism>
<protein>
    <recommendedName>
        <fullName evidence="10">Septin-14</fullName>
    </recommendedName>
</protein>
<dbReference type="EMBL" id="AK126048">
    <property type="protein sequence ID" value="BAC86412.1"/>
    <property type="status" value="ALT_INIT"/>
    <property type="molecule type" value="mRNA"/>
</dbReference>
<dbReference type="EMBL" id="AK301928">
    <property type="protein sequence ID" value="BAG63348.1"/>
    <property type="molecule type" value="mRNA"/>
</dbReference>
<dbReference type="EMBL" id="AC092647">
    <property type="status" value="NOT_ANNOTATED_CDS"/>
    <property type="molecule type" value="Genomic_DNA"/>
</dbReference>
<dbReference type="CCDS" id="CCDS5519.2"/>
<dbReference type="RefSeq" id="NP_997249.2">
    <property type="nucleotide sequence ID" value="NM_207366.3"/>
</dbReference>
<dbReference type="RefSeq" id="XP_011513675.1">
    <property type="nucleotide sequence ID" value="XM_011515373.2"/>
</dbReference>
<dbReference type="PDB" id="8SJJ">
    <property type="method" value="X-ray"/>
    <property type="resolution" value="1.78 A"/>
    <property type="chains" value="A/B=346-415"/>
</dbReference>
<dbReference type="PDBsum" id="8SJJ"/>
<dbReference type="SASBDB" id="Q6ZU15"/>
<dbReference type="SMR" id="Q6ZU15"/>
<dbReference type="BioGRID" id="131376">
    <property type="interactions" value="32"/>
</dbReference>
<dbReference type="FunCoup" id="Q6ZU15">
    <property type="interactions" value="21"/>
</dbReference>
<dbReference type="IntAct" id="Q6ZU15">
    <property type="interactions" value="30"/>
</dbReference>
<dbReference type="STRING" id="9606.ENSP00000373627"/>
<dbReference type="iPTMnet" id="Q6ZU15"/>
<dbReference type="PhosphoSitePlus" id="Q6ZU15"/>
<dbReference type="BioMuta" id="SEPT14"/>
<dbReference type="DMDM" id="152112291"/>
<dbReference type="jPOST" id="Q6ZU15"/>
<dbReference type="MassIVE" id="Q6ZU15"/>
<dbReference type="PaxDb" id="9606-ENSP00000373627"/>
<dbReference type="PeptideAtlas" id="Q6ZU15"/>
<dbReference type="ProteomicsDB" id="68306"/>
<dbReference type="Antibodypedia" id="56888">
    <property type="antibodies" value="89 antibodies from 20 providers"/>
</dbReference>
<dbReference type="DNASU" id="346288"/>
<dbReference type="Ensembl" id="ENST00000388975.4">
    <property type="protein sequence ID" value="ENSP00000373627.3"/>
    <property type="gene ID" value="ENSG00000154997.9"/>
</dbReference>
<dbReference type="GeneID" id="346288"/>
<dbReference type="KEGG" id="hsa:346288"/>
<dbReference type="MANE-Select" id="ENST00000388975.4">
    <property type="protein sequence ID" value="ENSP00000373627.3"/>
    <property type="RefSeq nucleotide sequence ID" value="NM_207366.3"/>
    <property type="RefSeq protein sequence ID" value="NP_997249.2"/>
</dbReference>
<dbReference type="UCSC" id="uc003tqz.2">
    <property type="organism name" value="human"/>
</dbReference>
<dbReference type="AGR" id="HGNC:33280"/>
<dbReference type="CTD" id="346288"/>
<dbReference type="DisGeNET" id="346288"/>
<dbReference type="GeneCards" id="SEPTIN14"/>
<dbReference type="HGNC" id="HGNC:33280">
    <property type="gene designation" value="SEPTIN14"/>
</dbReference>
<dbReference type="HPA" id="ENSG00000154997">
    <property type="expression patterns" value="Tissue enriched (testis)"/>
</dbReference>
<dbReference type="MalaCards" id="SEPTIN14"/>
<dbReference type="MIM" id="612140">
    <property type="type" value="gene"/>
</dbReference>
<dbReference type="neXtProt" id="NX_Q6ZU15"/>
<dbReference type="OpenTargets" id="ENSG00000154997"/>
<dbReference type="Orphanet" id="251579">
    <property type="disease" value="Giant cell glioblastoma"/>
</dbReference>
<dbReference type="Orphanet" id="251576">
    <property type="disease" value="Gliosarcoma"/>
</dbReference>
<dbReference type="PharmGKB" id="PA162402917"/>
<dbReference type="VEuPathDB" id="HostDB:ENSG00000154997"/>
<dbReference type="eggNOG" id="KOG3859">
    <property type="taxonomic scope" value="Eukaryota"/>
</dbReference>
<dbReference type="GeneTree" id="ENSGT00940000161752"/>
<dbReference type="HOGENOM" id="CLU_017718_8_1_1"/>
<dbReference type="InParanoid" id="Q6ZU15"/>
<dbReference type="OMA" id="THTWHYE"/>
<dbReference type="OrthoDB" id="416553at2759"/>
<dbReference type="PAN-GO" id="Q6ZU15">
    <property type="GO annotations" value="8 GO annotations based on evolutionary models"/>
</dbReference>
<dbReference type="PhylomeDB" id="Q6ZU15"/>
<dbReference type="TreeFam" id="TF101080"/>
<dbReference type="PathwayCommons" id="Q6ZU15"/>
<dbReference type="SignaLink" id="Q6ZU15"/>
<dbReference type="BioGRID-ORCS" id="346288">
    <property type="hits" value="10 hits in 1039 CRISPR screens"/>
</dbReference>
<dbReference type="ChiTaRS" id="SEPT14">
    <property type="organism name" value="human"/>
</dbReference>
<dbReference type="GenomeRNAi" id="346288"/>
<dbReference type="Pharos" id="Q6ZU15">
    <property type="development level" value="Tbio"/>
</dbReference>
<dbReference type="PRO" id="PR:Q6ZU15"/>
<dbReference type="Proteomes" id="UP000005640">
    <property type="component" value="Chromosome 7"/>
</dbReference>
<dbReference type="RNAct" id="Q6ZU15">
    <property type="molecule type" value="protein"/>
</dbReference>
<dbReference type="Bgee" id="ENSG00000154997">
    <property type="expression patterns" value="Expressed in right testis and 101 other cell types or tissues"/>
</dbReference>
<dbReference type="GO" id="GO:0001669">
    <property type="term" value="C:acrosomal vesicle"/>
    <property type="evidence" value="ECO:0000314"/>
    <property type="project" value="UniProtKB"/>
</dbReference>
<dbReference type="GO" id="GO:0030424">
    <property type="term" value="C:axon"/>
    <property type="evidence" value="ECO:0000250"/>
    <property type="project" value="UniProtKB"/>
</dbReference>
<dbReference type="GO" id="GO:0032153">
    <property type="term" value="C:cell division site"/>
    <property type="evidence" value="ECO:0000318"/>
    <property type="project" value="GO_Central"/>
</dbReference>
<dbReference type="GO" id="GO:0005737">
    <property type="term" value="C:cytoplasm"/>
    <property type="evidence" value="ECO:0000250"/>
    <property type="project" value="UniProtKB"/>
</dbReference>
<dbReference type="GO" id="GO:0005856">
    <property type="term" value="C:cytoskeleton"/>
    <property type="evidence" value="ECO:0000314"/>
    <property type="project" value="UniProtKB"/>
</dbReference>
<dbReference type="GO" id="GO:0030425">
    <property type="term" value="C:dendrite"/>
    <property type="evidence" value="ECO:0000250"/>
    <property type="project" value="UniProtKB"/>
</dbReference>
<dbReference type="GO" id="GO:0015630">
    <property type="term" value="C:microtubule cytoskeleton"/>
    <property type="evidence" value="ECO:0000318"/>
    <property type="project" value="GO_Central"/>
</dbReference>
<dbReference type="GO" id="GO:0043204">
    <property type="term" value="C:perikaryon"/>
    <property type="evidence" value="ECO:0000250"/>
    <property type="project" value="UniProtKB"/>
</dbReference>
<dbReference type="GO" id="GO:0048471">
    <property type="term" value="C:perinuclear region of cytoplasm"/>
    <property type="evidence" value="ECO:0000250"/>
    <property type="project" value="UniProtKB"/>
</dbReference>
<dbReference type="GO" id="GO:0031105">
    <property type="term" value="C:septin complex"/>
    <property type="evidence" value="ECO:0000318"/>
    <property type="project" value="GO_Central"/>
</dbReference>
<dbReference type="GO" id="GO:0005940">
    <property type="term" value="C:septin ring"/>
    <property type="evidence" value="ECO:0000318"/>
    <property type="project" value="GO_Central"/>
</dbReference>
<dbReference type="GO" id="GO:0005525">
    <property type="term" value="F:GTP binding"/>
    <property type="evidence" value="ECO:0007669"/>
    <property type="project" value="UniProtKB-KW"/>
</dbReference>
<dbReference type="GO" id="GO:0003924">
    <property type="term" value="F:GTPase activity"/>
    <property type="evidence" value="ECO:0000318"/>
    <property type="project" value="GO_Central"/>
</dbReference>
<dbReference type="GO" id="GO:0060090">
    <property type="term" value="F:molecular adaptor activity"/>
    <property type="evidence" value="ECO:0000318"/>
    <property type="project" value="GO_Central"/>
</dbReference>
<dbReference type="GO" id="GO:0061640">
    <property type="term" value="P:cytoskeleton-dependent cytokinesis"/>
    <property type="evidence" value="ECO:0000318"/>
    <property type="project" value="GO_Central"/>
</dbReference>
<dbReference type="GO" id="GO:0001764">
    <property type="term" value="P:neuron migration"/>
    <property type="evidence" value="ECO:0000250"/>
    <property type="project" value="UniProtKB"/>
</dbReference>
<dbReference type="GO" id="GO:0008104">
    <property type="term" value="P:protein localization"/>
    <property type="evidence" value="ECO:0000318"/>
    <property type="project" value="GO_Central"/>
</dbReference>
<dbReference type="GO" id="GO:1905719">
    <property type="term" value="P:protein localization to perinuclear region of cytoplasm"/>
    <property type="evidence" value="ECO:0000315"/>
    <property type="project" value="UniProtKB"/>
</dbReference>
<dbReference type="GO" id="GO:0007286">
    <property type="term" value="P:spermatid development"/>
    <property type="evidence" value="ECO:0000315"/>
    <property type="project" value="UniProtKB"/>
</dbReference>
<dbReference type="CDD" id="cd01850">
    <property type="entry name" value="CDC_Septin"/>
    <property type="match status" value="1"/>
</dbReference>
<dbReference type="FunFam" id="3.40.50.300:FF:000036">
    <property type="entry name" value="septin-6 isoform X2"/>
    <property type="match status" value="1"/>
</dbReference>
<dbReference type="Gene3D" id="3.40.50.300">
    <property type="entry name" value="P-loop containing nucleotide triphosphate hydrolases"/>
    <property type="match status" value="1"/>
</dbReference>
<dbReference type="InterPro" id="IPR030379">
    <property type="entry name" value="G_SEPTIN_dom"/>
</dbReference>
<dbReference type="InterPro" id="IPR027417">
    <property type="entry name" value="P-loop_NTPase"/>
</dbReference>
<dbReference type="InterPro" id="IPR016491">
    <property type="entry name" value="Septin"/>
</dbReference>
<dbReference type="PANTHER" id="PTHR18884">
    <property type="entry name" value="SEPTIN"/>
    <property type="match status" value="1"/>
</dbReference>
<dbReference type="Pfam" id="PF00735">
    <property type="entry name" value="Septin"/>
    <property type="match status" value="1"/>
</dbReference>
<dbReference type="PIRSF" id="PIRSF006698">
    <property type="entry name" value="Septin"/>
    <property type="match status" value="1"/>
</dbReference>
<dbReference type="SUPFAM" id="SSF52540">
    <property type="entry name" value="P-loop containing nucleoside triphosphate hydrolases"/>
    <property type="match status" value="1"/>
</dbReference>
<dbReference type="PROSITE" id="PS51719">
    <property type="entry name" value="G_SEPTIN"/>
    <property type="match status" value="1"/>
</dbReference>
<sequence>MAERTMAMPTQIPADGDTQKENNIRCLTTIGHFGFECLPNQLVSRSIRQGFTFNILCVGETGIGKSTLIDTLFNTNLKDNKSSHFYSNVGLQIQTYELQESNVQLKLTVVETVGYGDQIDKEASYQPIVDYIDAQFEAYLQEELKIKRSLFEYHDSRVHVCLYFISPTGHSLKSLDLLTMKNLDSKVNIIPLIAKADTISKNDLQTFKNKIMSELISNGIQIYQLPTDEETAAQANSSVSGLLPFAVVGSTDEVKVGKRMVRGRHYPWGVLQVENENHCDFVKLRDMLLCTNMENLKEKTHTQHYECYRYQKLQKMGFTDVGPNNQPVSFQEIFEAKRQEFYDQCQREEEELKQRFMQRVKEKEATFKEAEKELQDKFEHLKMIQQEEIRKLEEEKKQLEGEIIDFYKMKAASEALQTQLSTDTKKDKHRKK</sequence>
<accession>Q6ZU15</accession>
<accession>A6NCC2</accession>
<accession>B4DXD6</accession>
<proteinExistence type="evidence at protein level"/>
<feature type="chain" id="PRO_0000294425" description="Septin-14">
    <location>
        <begin position="1"/>
        <end position="432"/>
    </location>
</feature>
<feature type="domain" description="Septin-type G" evidence="4">
    <location>
        <begin position="49"/>
        <end position="315"/>
    </location>
</feature>
<feature type="region of interest" description="G1 motif" evidence="4">
    <location>
        <begin position="59"/>
        <end position="66"/>
    </location>
</feature>
<feature type="region of interest" description="G3 motif" evidence="4">
    <location>
        <begin position="111"/>
        <end position="114"/>
    </location>
</feature>
<feature type="region of interest" description="G4 motif" evidence="4">
    <location>
        <begin position="194"/>
        <end position="197"/>
    </location>
</feature>
<feature type="region of interest" description="Required for interaction with SEPTIN4. Required for migration of cortical neurons during corticogenesis" evidence="2">
    <location>
        <begin position="369"/>
        <end position="432"/>
    </location>
</feature>
<feature type="coiled-coil region" evidence="3">
    <location>
        <begin position="332"/>
        <end position="412"/>
    </location>
</feature>
<feature type="binding site" evidence="1">
    <location>
        <begin position="59"/>
        <end position="66"/>
    </location>
    <ligand>
        <name>GTP</name>
        <dbReference type="ChEBI" id="CHEBI:37565"/>
    </ligand>
</feature>
<feature type="binding site" evidence="1">
    <location>
        <position position="114"/>
    </location>
    <ligand>
        <name>GTP</name>
        <dbReference type="ChEBI" id="CHEBI:37565"/>
    </ligand>
</feature>
<feature type="binding site" evidence="1">
    <location>
        <begin position="195"/>
        <end position="203"/>
    </location>
    <ligand>
        <name>GTP</name>
        <dbReference type="ChEBI" id="CHEBI:37565"/>
    </ligand>
</feature>
<feature type="binding site" evidence="1">
    <location>
        <position position="249"/>
    </location>
    <ligand>
        <name>GTP</name>
        <dbReference type="ChEBI" id="CHEBI:37565"/>
    </ligand>
</feature>
<feature type="binding site" evidence="1">
    <location>
        <position position="264"/>
    </location>
    <ligand>
        <name>GTP</name>
        <dbReference type="ChEBI" id="CHEBI:37565"/>
    </ligand>
</feature>
<feature type="sequence variant" id="VAR_085117" description="Found in patients with teratozoospermia; uncertain significance; sperm heads are malformed and contain vacuoles; chromatin packaging and structure is abnormal with an increase in fragmented DNA; decreases sperm filamentous structure formation; loss of SEPTIN14 and ACTN4 localization to cell filament structures; no effect on interaction with ACTN4; dbSNP:rs1417582759." evidence="6 8">
    <original>A</original>
    <variation>T</variation>
    <location>
        <position position="123"/>
    </location>
</feature>
<feature type="sequence variant" id="VAR_085118" description="Found in patients with teratozoospermia; uncertain significance; sperm heads are malformed and contain vacuoles; chromatin packaging and structure is abnormal with an increase in fragmented DNA; decreases sperm filamentous structure formation; loss of SEPTIN14 and ACTN4 localization to cell filament structures; no effect on interaction with ACTN4; dbSNP:rs185254020." evidence="6 8">
    <original>I</original>
    <variation>T</variation>
    <location>
        <position position="333"/>
    </location>
</feature>
<feature type="helix" evidence="11">
    <location>
        <begin position="346"/>
        <end position="413"/>
    </location>
</feature>